<comment type="function">
    <text evidence="1">Endonuclease that is involved in the suppression of homologous recombination and thus may have a key role in the control of bacterial genetic diversity.</text>
</comment>
<comment type="function">
    <text evidence="1">Acts as a ribosome collision sensor, splitting the ribosome into its 2 subunits. Detects stalled/collided 70S ribosomes which it binds and splits by an ATP-hydrolysis driven conformational change. Acts upstream of the ribosome quality control system (RQC), a ribosome-associated complex that mediates the extraction of incompletely synthesized nascent chains from stalled ribosomes and their subsequent degradation. Probably generates substrates for RQC.</text>
</comment>
<comment type="subunit">
    <text evidence="1">Homodimer. Binds to stalled ribosomes, contacting rRNA.</text>
</comment>
<comment type="similarity">
    <text evidence="1">Belongs to the DNA mismatch repair MutS family. MutS2 subfamily.</text>
</comment>
<dbReference type="EC" id="3.1.-.-" evidence="1"/>
<dbReference type="EC" id="3.6.4.-" evidence="1"/>
<dbReference type="EMBL" id="CP000023">
    <property type="protein sequence ID" value="AAV61361.1"/>
    <property type="molecule type" value="Genomic_DNA"/>
</dbReference>
<dbReference type="RefSeq" id="WP_011226555.1">
    <property type="nucleotide sequence ID" value="NC_006448.1"/>
</dbReference>
<dbReference type="SMR" id="Q5M2P5"/>
<dbReference type="STRING" id="264199.stu1762"/>
<dbReference type="KEGG" id="stl:stu1762"/>
<dbReference type="PATRIC" id="fig|264199.4.peg.1739"/>
<dbReference type="eggNOG" id="COG1193">
    <property type="taxonomic scope" value="Bacteria"/>
</dbReference>
<dbReference type="HOGENOM" id="CLU_011252_2_1_9"/>
<dbReference type="Proteomes" id="UP000001170">
    <property type="component" value="Chromosome"/>
</dbReference>
<dbReference type="GO" id="GO:0005524">
    <property type="term" value="F:ATP binding"/>
    <property type="evidence" value="ECO:0007669"/>
    <property type="project" value="UniProtKB-UniRule"/>
</dbReference>
<dbReference type="GO" id="GO:0016887">
    <property type="term" value="F:ATP hydrolysis activity"/>
    <property type="evidence" value="ECO:0007669"/>
    <property type="project" value="InterPro"/>
</dbReference>
<dbReference type="GO" id="GO:0140664">
    <property type="term" value="F:ATP-dependent DNA damage sensor activity"/>
    <property type="evidence" value="ECO:0007669"/>
    <property type="project" value="InterPro"/>
</dbReference>
<dbReference type="GO" id="GO:0004519">
    <property type="term" value="F:endonuclease activity"/>
    <property type="evidence" value="ECO:0007669"/>
    <property type="project" value="UniProtKB-UniRule"/>
</dbReference>
<dbReference type="GO" id="GO:0030983">
    <property type="term" value="F:mismatched DNA binding"/>
    <property type="evidence" value="ECO:0007669"/>
    <property type="project" value="InterPro"/>
</dbReference>
<dbReference type="GO" id="GO:0043023">
    <property type="term" value="F:ribosomal large subunit binding"/>
    <property type="evidence" value="ECO:0007669"/>
    <property type="project" value="UniProtKB-UniRule"/>
</dbReference>
<dbReference type="GO" id="GO:0019843">
    <property type="term" value="F:rRNA binding"/>
    <property type="evidence" value="ECO:0007669"/>
    <property type="project" value="UniProtKB-UniRule"/>
</dbReference>
<dbReference type="GO" id="GO:0006298">
    <property type="term" value="P:mismatch repair"/>
    <property type="evidence" value="ECO:0007669"/>
    <property type="project" value="InterPro"/>
</dbReference>
<dbReference type="GO" id="GO:0045910">
    <property type="term" value="P:negative regulation of DNA recombination"/>
    <property type="evidence" value="ECO:0007669"/>
    <property type="project" value="InterPro"/>
</dbReference>
<dbReference type="GO" id="GO:0072344">
    <property type="term" value="P:rescue of stalled ribosome"/>
    <property type="evidence" value="ECO:0007669"/>
    <property type="project" value="UniProtKB-UniRule"/>
</dbReference>
<dbReference type="CDD" id="cd03280">
    <property type="entry name" value="ABC_MutS2"/>
    <property type="match status" value="1"/>
</dbReference>
<dbReference type="FunFam" id="3.30.1370.110:FF:000004">
    <property type="entry name" value="Endonuclease MutS2"/>
    <property type="match status" value="1"/>
</dbReference>
<dbReference type="FunFam" id="3.40.50.300:FF:000830">
    <property type="entry name" value="Endonuclease MutS2"/>
    <property type="match status" value="1"/>
</dbReference>
<dbReference type="Gene3D" id="3.30.1370.110">
    <property type="match status" value="1"/>
</dbReference>
<dbReference type="Gene3D" id="3.40.50.300">
    <property type="entry name" value="P-loop containing nucleotide triphosphate hydrolases"/>
    <property type="match status" value="1"/>
</dbReference>
<dbReference type="HAMAP" id="MF_00092">
    <property type="entry name" value="MutS2"/>
    <property type="match status" value="1"/>
</dbReference>
<dbReference type="InterPro" id="IPR000432">
    <property type="entry name" value="DNA_mismatch_repair_MutS_C"/>
</dbReference>
<dbReference type="InterPro" id="IPR007696">
    <property type="entry name" value="DNA_mismatch_repair_MutS_core"/>
</dbReference>
<dbReference type="InterPro" id="IPR036187">
    <property type="entry name" value="DNA_mismatch_repair_MutS_sf"/>
</dbReference>
<dbReference type="InterPro" id="IPR046893">
    <property type="entry name" value="MSSS"/>
</dbReference>
<dbReference type="InterPro" id="IPR045076">
    <property type="entry name" value="MutS"/>
</dbReference>
<dbReference type="InterPro" id="IPR005747">
    <property type="entry name" value="MutS2"/>
</dbReference>
<dbReference type="InterPro" id="IPR027417">
    <property type="entry name" value="P-loop_NTPase"/>
</dbReference>
<dbReference type="InterPro" id="IPR002625">
    <property type="entry name" value="Smr_dom"/>
</dbReference>
<dbReference type="InterPro" id="IPR036063">
    <property type="entry name" value="Smr_dom_sf"/>
</dbReference>
<dbReference type="NCBIfam" id="TIGR01069">
    <property type="entry name" value="mutS2"/>
    <property type="match status" value="1"/>
</dbReference>
<dbReference type="PANTHER" id="PTHR48466:SF2">
    <property type="entry name" value="OS10G0509000 PROTEIN"/>
    <property type="match status" value="1"/>
</dbReference>
<dbReference type="PANTHER" id="PTHR48466">
    <property type="entry name" value="OS10G0509000 PROTEIN-RELATED"/>
    <property type="match status" value="1"/>
</dbReference>
<dbReference type="Pfam" id="PF20297">
    <property type="entry name" value="MSSS"/>
    <property type="match status" value="1"/>
</dbReference>
<dbReference type="Pfam" id="PF00488">
    <property type="entry name" value="MutS_V"/>
    <property type="match status" value="1"/>
</dbReference>
<dbReference type="Pfam" id="PF01713">
    <property type="entry name" value="Smr"/>
    <property type="match status" value="1"/>
</dbReference>
<dbReference type="PIRSF" id="PIRSF005814">
    <property type="entry name" value="MutS_YshD"/>
    <property type="match status" value="1"/>
</dbReference>
<dbReference type="SMART" id="SM00534">
    <property type="entry name" value="MUTSac"/>
    <property type="match status" value="1"/>
</dbReference>
<dbReference type="SMART" id="SM00533">
    <property type="entry name" value="MUTSd"/>
    <property type="match status" value="1"/>
</dbReference>
<dbReference type="SMART" id="SM00463">
    <property type="entry name" value="SMR"/>
    <property type="match status" value="1"/>
</dbReference>
<dbReference type="SUPFAM" id="SSF48334">
    <property type="entry name" value="DNA repair protein MutS, domain III"/>
    <property type="match status" value="1"/>
</dbReference>
<dbReference type="SUPFAM" id="SSF52540">
    <property type="entry name" value="P-loop containing nucleoside triphosphate hydrolases"/>
    <property type="match status" value="1"/>
</dbReference>
<dbReference type="SUPFAM" id="SSF160443">
    <property type="entry name" value="SMR domain-like"/>
    <property type="match status" value="1"/>
</dbReference>
<dbReference type="PROSITE" id="PS00486">
    <property type="entry name" value="DNA_MISMATCH_REPAIR_2"/>
    <property type="match status" value="1"/>
</dbReference>
<dbReference type="PROSITE" id="PS50828">
    <property type="entry name" value="SMR"/>
    <property type="match status" value="1"/>
</dbReference>
<proteinExistence type="inferred from homology"/>
<organism>
    <name type="scientific">Streptococcus thermophilus (strain ATCC BAA-250 / LMG 18311)</name>
    <dbReference type="NCBI Taxonomy" id="264199"/>
    <lineage>
        <taxon>Bacteria</taxon>
        <taxon>Bacillati</taxon>
        <taxon>Bacillota</taxon>
        <taxon>Bacilli</taxon>
        <taxon>Lactobacillales</taxon>
        <taxon>Streptococcaceae</taxon>
        <taxon>Streptococcus</taxon>
    </lineage>
</organism>
<sequence length="783" mass="88077">MNTKILDQLEFNKVKDQFTEYLQTEQAQAELRDLVPMTNPERIQNQFTEIQEMSEIFVEHHGFAIGSLRDISEPLRRLELDADLNIQELIAIKKVLQASADLSRFYADLENVELIALKRLFEKIEAFPSLQGSLQSINDGGFIEHFASPELQNIRRQLKACDDAIRQTLQDILKKSGHMLAENLIASRNGRSVLPVKNTYRNRIAGVVHDISSSGNTVYIEPRAVIQLNEKITQLRADERHEMARILHELSDQLRPHTAAIANNAWILGHMDFIRGKYLYLHDKKAIIPEISDNQTLQLLNVRHPLLINPVANDLRFDEDLTVIVITGPNTGGKTVMLKTLGLAQLMAQSGLPILADKGSRVAIFQEIFADIGDEQSIEQSLSTFSSHMTHIVEILNTADSNSLVLVDELGAGTDPQEGASLAMAILEHLRLSQIKTMATTHYPELKAYGIETQHVENASMEFDTATLRPTYRFMQGVPGRSNAFEIARRLGLNEIIVKEAENLTDTDSDVNRIIEQLEAQTVETQKRLEHIKDVEQENLKFNRAVKKLYNEFSHEYDKELEKAQKEIQEMVDTALAESDSILKNLHDKSQLKPHEVIDAKGKLKKLAAQVDLSKNKVLRKAKKEKAARAPRVGDDIIVTAYGQRGTLTSQAKNGNWEAQVGLIKMSLKADEFTLVRTQAEAQQPKKKQINVVKKAKKTSSDGPRARLDLRGKRYEEAMQELDAFIDQALLNNMSQVEIIHGIGTGVIRDAVTKYLRRHRHVKNFEYAPQSAGGSGCTIATLG</sequence>
<keyword id="KW-0067">ATP-binding</keyword>
<keyword id="KW-0238">DNA-binding</keyword>
<keyword id="KW-0255">Endonuclease</keyword>
<keyword id="KW-0378">Hydrolase</keyword>
<keyword id="KW-0540">Nuclease</keyword>
<keyword id="KW-0547">Nucleotide-binding</keyword>
<keyword id="KW-1185">Reference proteome</keyword>
<keyword id="KW-0694">RNA-binding</keyword>
<keyword id="KW-0699">rRNA-binding</keyword>
<accession>Q5M2P5</accession>
<protein>
    <recommendedName>
        <fullName evidence="1">Endonuclease MutS2</fullName>
        <ecNumber evidence="1">3.1.-.-</ecNumber>
    </recommendedName>
    <alternativeName>
        <fullName evidence="1">Ribosome-associated protein quality control-upstream factor</fullName>
        <shortName evidence="1">RQC-upstream factor</shortName>
        <shortName evidence="1">RqcU</shortName>
        <ecNumber evidence="1">3.6.4.-</ecNumber>
    </alternativeName>
</protein>
<name>MUTS2_STRT2</name>
<reference key="1">
    <citation type="journal article" date="2004" name="Nat. Biotechnol.">
        <title>Complete sequence and comparative genome analysis of the dairy bacterium Streptococcus thermophilus.</title>
        <authorList>
            <person name="Bolotin A."/>
            <person name="Quinquis B."/>
            <person name="Renault P."/>
            <person name="Sorokin A."/>
            <person name="Ehrlich S.D."/>
            <person name="Kulakauskas S."/>
            <person name="Lapidus A."/>
            <person name="Goltsman E."/>
            <person name="Mazur M."/>
            <person name="Pusch G.D."/>
            <person name="Fonstein M."/>
            <person name="Overbeek R."/>
            <person name="Kyprides N."/>
            <person name="Purnelle B."/>
            <person name="Prozzi D."/>
            <person name="Ngui K."/>
            <person name="Masuy D."/>
            <person name="Hancy F."/>
            <person name="Burteau S."/>
            <person name="Boutry M."/>
            <person name="Delcour J."/>
            <person name="Goffeau A."/>
            <person name="Hols P."/>
        </authorList>
    </citation>
    <scope>NUCLEOTIDE SEQUENCE [LARGE SCALE GENOMIC DNA]</scope>
    <source>
        <strain>ATCC BAA-250 / LMG 18311</strain>
    </source>
</reference>
<feature type="chain" id="PRO_1000093406" description="Endonuclease MutS2">
    <location>
        <begin position="1"/>
        <end position="783"/>
    </location>
</feature>
<feature type="domain" description="Smr" evidence="1">
    <location>
        <begin position="708"/>
        <end position="783"/>
    </location>
</feature>
<feature type="binding site" evidence="1">
    <location>
        <begin position="328"/>
        <end position="335"/>
    </location>
    <ligand>
        <name>ATP</name>
        <dbReference type="ChEBI" id="CHEBI:30616"/>
    </ligand>
</feature>
<evidence type="ECO:0000255" key="1">
    <source>
        <dbReference type="HAMAP-Rule" id="MF_00092"/>
    </source>
</evidence>
<gene>
    <name evidence="1" type="primary">mutS2</name>
    <name evidence="1" type="synonym">rqcU</name>
    <name type="ordered locus">stu1762</name>
</gene>